<accession>B7GYR0</accession>
<gene>
    <name evidence="1" type="primary">pth</name>
    <name type="ordered locus">ABBFA_002785</name>
</gene>
<evidence type="ECO:0000255" key="1">
    <source>
        <dbReference type="HAMAP-Rule" id="MF_00083"/>
    </source>
</evidence>
<keyword id="KW-0963">Cytoplasm</keyword>
<keyword id="KW-0378">Hydrolase</keyword>
<keyword id="KW-0694">RNA-binding</keyword>
<keyword id="KW-0820">tRNA-binding</keyword>
<feature type="chain" id="PRO_1000192951" description="Peptidyl-tRNA hydrolase">
    <location>
        <begin position="1"/>
        <end position="193"/>
    </location>
</feature>
<feature type="active site" description="Proton acceptor" evidence="1">
    <location>
        <position position="22"/>
    </location>
</feature>
<feature type="binding site" evidence="1">
    <location>
        <position position="17"/>
    </location>
    <ligand>
        <name>tRNA</name>
        <dbReference type="ChEBI" id="CHEBI:17843"/>
    </ligand>
</feature>
<feature type="binding site" evidence="1">
    <location>
        <position position="68"/>
    </location>
    <ligand>
        <name>tRNA</name>
        <dbReference type="ChEBI" id="CHEBI:17843"/>
    </ligand>
</feature>
<feature type="binding site" evidence="1">
    <location>
        <position position="70"/>
    </location>
    <ligand>
        <name>tRNA</name>
        <dbReference type="ChEBI" id="CHEBI:17843"/>
    </ligand>
</feature>
<feature type="binding site" evidence="1">
    <location>
        <position position="116"/>
    </location>
    <ligand>
        <name>tRNA</name>
        <dbReference type="ChEBI" id="CHEBI:17843"/>
    </ligand>
</feature>
<feature type="site" description="Discriminates between blocked and unblocked aminoacyl-tRNA" evidence="1">
    <location>
        <position position="12"/>
    </location>
</feature>
<feature type="site" description="Stabilizes the basic form of H active site to accept a proton" evidence="1">
    <location>
        <position position="95"/>
    </location>
</feature>
<dbReference type="EC" id="3.1.1.29" evidence="1"/>
<dbReference type="EMBL" id="CP001172">
    <property type="protein sequence ID" value="ACJ56642.1"/>
    <property type="molecule type" value="Genomic_DNA"/>
</dbReference>
<dbReference type="RefSeq" id="WP_000065594.1">
    <property type="nucleotide sequence ID" value="NZ_CP001172.1"/>
</dbReference>
<dbReference type="SMR" id="B7GYR0"/>
<dbReference type="HOGENOM" id="CLU_062456_3_1_6"/>
<dbReference type="BRENDA" id="3.1.1.29">
    <property type="organism ID" value="98"/>
</dbReference>
<dbReference type="Proteomes" id="UP000006924">
    <property type="component" value="Chromosome"/>
</dbReference>
<dbReference type="GO" id="GO:0005737">
    <property type="term" value="C:cytoplasm"/>
    <property type="evidence" value="ECO:0007669"/>
    <property type="project" value="UniProtKB-SubCell"/>
</dbReference>
<dbReference type="GO" id="GO:0004045">
    <property type="term" value="F:peptidyl-tRNA hydrolase activity"/>
    <property type="evidence" value="ECO:0007669"/>
    <property type="project" value="UniProtKB-UniRule"/>
</dbReference>
<dbReference type="GO" id="GO:0000049">
    <property type="term" value="F:tRNA binding"/>
    <property type="evidence" value="ECO:0007669"/>
    <property type="project" value="UniProtKB-UniRule"/>
</dbReference>
<dbReference type="GO" id="GO:0006515">
    <property type="term" value="P:protein quality control for misfolded or incompletely synthesized proteins"/>
    <property type="evidence" value="ECO:0007669"/>
    <property type="project" value="UniProtKB-UniRule"/>
</dbReference>
<dbReference type="GO" id="GO:0072344">
    <property type="term" value="P:rescue of stalled ribosome"/>
    <property type="evidence" value="ECO:0007669"/>
    <property type="project" value="UniProtKB-UniRule"/>
</dbReference>
<dbReference type="CDD" id="cd00462">
    <property type="entry name" value="PTH"/>
    <property type="match status" value="1"/>
</dbReference>
<dbReference type="FunFam" id="3.40.50.1470:FF:000001">
    <property type="entry name" value="Peptidyl-tRNA hydrolase"/>
    <property type="match status" value="1"/>
</dbReference>
<dbReference type="Gene3D" id="3.40.50.1470">
    <property type="entry name" value="Peptidyl-tRNA hydrolase"/>
    <property type="match status" value="1"/>
</dbReference>
<dbReference type="HAMAP" id="MF_00083">
    <property type="entry name" value="Pept_tRNA_hydro_bact"/>
    <property type="match status" value="1"/>
</dbReference>
<dbReference type="InterPro" id="IPR001328">
    <property type="entry name" value="Pept_tRNA_hydro"/>
</dbReference>
<dbReference type="InterPro" id="IPR018171">
    <property type="entry name" value="Pept_tRNA_hydro_CS"/>
</dbReference>
<dbReference type="InterPro" id="IPR036416">
    <property type="entry name" value="Pept_tRNA_hydro_sf"/>
</dbReference>
<dbReference type="NCBIfam" id="TIGR00447">
    <property type="entry name" value="pth"/>
    <property type="match status" value="1"/>
</dbReference>
<dbReference type="PANTHER" id="PTHR17224">
    <property type="entry name" value="PEPTIDYL-TRNA HYDROLASE"/>
    <property type="match status" value="1"/>
</dbReference>
<dbReference type="PANTHER" id="PTHR17224:SF1">
    <property type="entry name" value="PEPTIDYL-TRNA HYDROLASE"/>
    <property type="match status" value="1"/>
</dbReference>
<dbReference type="Pfam" id="PF01195">
    <property type="entry name" value="Pept_tRNA_hydro"/>
    <property type="match status" value="1"/>
</dbReference>
<dbReference type="SUPFAM" id="SSF53178">
    <property type="entry name" value="Peptidyl-tRNA hydrolase-like"/>
    <property type="match status" value="1"/>
</dbReference>
<dbReference type="PROSITE" id="PS01195">
    <property type="entry name" value="PEPT_TRNA_HYDROL_1"/>
    <property type="match status" value="1"/>
</dbReference>
<dbReference type="PROSITE" id="PS01196">
    <property type="entry name" value="PEPT_TRNA_HYDROL_2"/>
    <property type="match status" value="1"/>
</dbReference>
<organism>
    <name type="scientific">Acinetobacter baumannii (strain AB307-0294)</name>
    <dbReference type="NCBI Taxonomy" id="557600"/>
    <lineage>
        <taxon>Bacteria</taxon>
        <taxon>Pseudomonadati</taxon>
        <taxon>Pseudomonadota</taxon>
        <taxon>Gammaproteobacteria</taxon>
        <taxon>Moraxellales</taxon>
        <taxon>Moraxellaceae</taxon>
        <taxon>Acinetobacter</taxon>
        <taxon>Acinetobacter calcoaceticus/baumannii complex</taxon>
    </lineage>
</organism>
<proteinExistence type="inferred from homology"/>
<comment type="function">
    <text evidence="1">Hydrolyzes ribosome-free peptidyl-tRNAs (with 1 or more amino acids incorporated), which drop off the ribosome during protein synthesis, or as a result of ribosome stalling.</text>
</comment>
<comment type="function">
    <text evidence="1">Catalyzes the release of premature peptidyl moieties from peptidyl-tRNA molecules trapped in stalled 50S ribosomal subunits, and thus maintains levels of free tRNAs and 50S ribosomes.</text>
</comment>
<comment type="catalytic activity">
    <reaction evidence="1">
        <text>an N-acyl-L-alpha-aminoacyl-tRNA + H2O = an N-acyl-L-amino acid + a tRNA + H(+)</text>
        <dbReference type="Rhea" id="RHEA:54448"/>
        <dbReference type="Rhea" id="RHEA-COMP:10123"/>
        <dbReference type="Rhea" id="RHEA-COMP:13883"/>
        <dbReference type="ChEBI" id="CHEBI:15377"/>
        <dbReference type="ChEBI" id="CHEBI:15378"/>
        <dbReference type="ChEBI" id="CHEBI:59874"/>
        <dbReference type="ChEBI" id="CHEBI:78442"/>
        <dbReference type="ChEBI" id="CHEBI:138191"/>
        <dbReference type="EC" id="3.1.1.29"/>
    </reaction>
</comment>
<comment type="subunit">
    <text evidence="1">Monomer.</text>
</comment>
<comment type="subcellular location">
    <subcellularLocation>
        <location evidence="1">Cytoplasm</location>
    </subcellularLocation>
</comment>
<comment type="similarity">
    <text evidence="1">Belongs to the PTH family.</text>
</comment>
<reference key="1">
    <citation type="journal article" date="2008" name="J. Bacteriol.">
        <title>Comparative genome sequence analysis of multidrug-resistant Acinetobacter baumannii.</title>
        <authorList>
            <person name="Adams M.D."/>
            <person name="Goglin K."/>
            <person name="Molyneaux N."/>
            <person name="Hujer K.M."/>
            <person name="Lavender H."/>
            <person name="Jamison J.J."/>
            <person name="MacDonald I.J."/>
            <person name="Martin K.M."/>
            <person name="Russo T."/>
            <person name="Campagnari A.A."/>
            <person name="Hujer A.M."/>
            <person name="Bonomo R.A."/>
            <person name="Gill S.R."/>
        </authorList>
    </citation>
    <scope>NUCLEOTIDE SEQUENCE [LARGE SCALE GENOMIC DNA]</scope>
    <source>
        <strain>AB307-0294</strain>
    </source>
</reference>
<sequence>MSNISLIVGLGNPGSEYAQTRHNAGFWFVEQLADKYGITLKNDPKFHGISGRGNIEGHDVRLLLPMTYMNRSGQSVVPFSKFYQIAPEAILIAHDELDMNPGVIRLKTGGGHGGHNGLRDIVPHIGPNFHRLRIGIGHPGSKERVSGHVLGKAPSSEQSLMDGAIDHALSKVKLLVQGQVPQAMNQINAYKPA</sequence>
<name>PTH_ACIB3</name>
<protein>
    <recommendedName>
        <fullName evidence="1">Peptidyl-tRNA hydrolase</fullName>
        <shortName evidence="1">Pth</shortName>
        <ecNumber evidence="1">3.1.1.29</ecNumber>
    </recommendedName>
</protein>